<dbReference type="EC" id="3.6.4.13"/>
<dbReference type="EMBL" id="CR382130">
    <property type="protein sequence ID" value="CAG81377.1"/>
    <property type="molecule type" value="Genomic_DNA"/>
</dbReference>
<dbReference type="RefSeq" id="XP_503177.1">
    <property type="nucleotide sequence ID" value="XM_503177.1"/>
</dbReference>
<dbReference type="SMR" id="Q6C835"/>
<dbReference type="FunCoup" id="Q6C835">
    <property type="interactions" value="802"/>
</dbReference>
<dbReference type="STRING" id="284591.Q6C835"/>
<dbReference type="EnsemblFungi" id="CAG81377">
    <property type="protein sequence ID" value="CAG81377"/>
    <property type="gene ID" value="YALI0_D23133g"/>
</dbReference>
<dbReference type="KEGG" id="yli:2910285"/>
<dbReference type="VEuPathDB" id="FungiDB:YALI0_D23133g"/>
<dbReference type="HOGENOM" id="CLU_003041_26_2_1"/>
<dbReference type="InParanoid" id="Q6C835"/>
<dbReference type="OMA" id="AVHIKAD"/>
<dbReference type="OrthoDB" id="111374at4891"/>
<dbReference type="Proteomes" id="UP000001300">
    <property type="component" value="Chromosome D"/>
</dbReference>
<dbReference type="GO" id="GO:0005730">
    <property type="term" value="C:nucleolus"/>
    <property type="evidence" value="ECO:0007669"/>
    <property type="project" value="UniProtKB-SubCell"/>
</dbReference>
<dbReference type="GO" id="GO:0005634">
    <property type="term" value="C:nucleus"/>
    <property type="evidence" value="ECO:0000318"/>
    <property type="project" value="GO_Central"/>
</dbReference>
<dbReference type="GO" id="GO:0005524">
    <property type="term" value="F:ATP binding"/>
    <property type="evidence" value="ECO:0007669"/>
    <property type="project" value="UniProtKB-KW"/>
</dbReference>
<dbReference type="GO" id="GO:0016887">
    <property type="term" value="F:ATP hydrolysis activity"/>
    <property type="evidence" value="ECO:0007669"/>
    <property type="project" value="RHEA"/>
</dbReference>
<dbReference type="GO" id="GO:0003723">
    <property type="term" value="F:RNA binding"/>
    <property type="evidence" value="ECO:0007669"/>
    <property type="project" value="UniProtKB-KW"/>
</dbReference>
<dbReference type="GO" id="GO:0003724">
    <property type="term" value="F:RNA helicase activity"/>
    <property type="evidence" value="ECO:0007669"/>
    <property type="project" value="UniProtKB-EC"/>
</dbReference>
<dbReference type="GO" id="GO:0042254">
    <property type="term" value="P:ribosome biogenesis"/>
    <property type="evidence" value="ECO:0000318"/>
    <property type="project" value="GO_Central"/>
</dbReference>
<dbReference type="GO" id="GO:0006364">
    <property type="term" value="P:rRNA processing"/>
    <property type="evidence" value="ECO:0007669"/>
    <property type="project" value="UniProtKB-KW"/>
</dbReference>
<dbReference type="CDD" id="cd17949">
    <property type="entry name" value="DEADc_DDX31"/>
    <property type="match status" value="1"/>
</dbReference>
<dbReference type="CDD" id="cd18787">
    <property type="entry name" value="SF2_C_DEAD"/>
    <property type="match status" value="1"/>
</dbReference>
<dbReference type="Gene3D" id="3.40.50.300">
    <property type="entry name" value="P-loop containing nucleotide triphosphate hydrolases"/>
    <property type="match status" value="2"/>
</dbReference>
<dbReference type="InterPro" id="IPR011545">
    <property type="entry name" value="DEAD/DEAH_box_helicase_dom"/>
</dbReference>
<dbReference type="InterPro" id="IPR014001">
    <property type="entry name" value="Helicase_ATP-bd"/>
</dbReference>
<dbReference type="InterPro" id="IPR001650">
    <property type="entry name" value="Helicase_C-like"/>
</dbReference>
<dbReference type="InterPro" id="IPR027417">
    <property type="entry name" value="P-loop_NTPase"/>
</dbReference>
<dbReference type="InterPro" id="IPR025313">
    <property type="entry name" value="SPB4-like_CTE"/>
</dbReference>
<dbReference type="PANTHER" id="PTHR24031">
    <property type="entry name" value="RNA HELICASE"/>
    <property type="match status" value="1"/>
</dbReference>
<dbReference type="Pfam" id="PF13959">
    <property type="entry name" value="CTE_SPB4"/>
    <property type="match status" value="1"/>
</dbReference>
<dbReference type="Pfam" id="PF00270">
    <property type="entry name" value="DEAD"/>
    <property type="match status" value="1"/>
</dbReference>
<dbReference type="Pfam" id="PF00271">
    <property type="entry name" value="Helicase_C"/>
    <property type="match status" value="1"/>
</dbReference>
<dbReference type="SMART" id="SM00487">
    <property type="entry name" value="DEXDc"/>
    <property type="match status" value="1"/>
</dbReference>
<dbReference type="SMART" id="SM01178">
    <property type="entry name" value="DUF4217"/>
    <property type="match status" value="1"/>
</dbReference>
<dbReference type="SMART" id="SM00490">
    <property type="entry name" value="HELICc"/>
    <property type="match status" value="1"/>
</dbReference>
<dbReference type="SUPFAM" id="SSF52540">
    <property type="entry name" value="P-loop containing nucleoside triphosphate hydrolases"/>
    <property type="match status" value="2"/>
</dbReference>
<dbReference type="PROSITE" id="PS51192">
    <property type="entry name" value="HELICASE_ATP_BIND_1"/>
    <property type="match status" value="1"/>
</dbReference>
<dbReference type="PROSITE" id="PS51194">
    <property type="entry name" value="HELICASE_CTER"/>
    <property type="match status" value="1"/>
</dbReference>
<dbReference type="PROSITE" id="PS51195">
    <property type="entry name" value="Q_MOTIF"/>
    <property type="match status" value="1"/>
</dbReference>
<evidence type="ECO:0000250" key="1"/>
<evidence type="ECO:0000255" key="2">
    <source>
        <dbReference type="PROSITE-ProRule" id="PRU00541"/>
    </source>
</evidence>
<evidence type="ECO:0000255" key="3">
    <source>
        <dbReference type="PROSITE-ProRule" id="PRU00542"/>
    </source>
</evidence>
<evidence type="ECO:0000256" key="4">
    <source>
        <dbReference type="SAM" id="MobiDB-lite"/>
    </source>
</evidence>
<evidence type="ECO:0000305" key="5"/>
<reference key="1">
    <citation type="journal article" date="2004" name="Nature">
        <title>Genome evolution in yeasts.</title>
        <authorList>
            <person name="Dujon B."/>
            <person name="Sherman D."/>
            <person name="Fischer G."/>
            <person name="Durrens P."/>
            <person name="Casaregola S."/>
            <person name="Lafontaine I."/>
            <person name="de Montigny J."/>
            <person name="Marck C."/>
            <person name="Neuveglise C."/>
            <person name="Talla E."/>
            <person name="Goffard N."/>
            <person name="Frangeul L."/>
            <person name="Aigle M."/>
            <person name="Anthouard V."/>
            <person name="Babour A."/>
            <person name="Barbe V."/>
            <person name="Barnay S."/>
            <person name="Blanchin S."/>
            <person name="Beckerich J.-M."/>
            <person name="Beyne E."/>
            <person name="Bleykasten C."/>
            <person name="Boisrame A."/>
            <person name="Boyer J."/>
            <person name="Cattolico L."/>
            <person name="Confanioleri F."/>
            <person name="de Daruvar A."/>
            <person name="Despons L."/>
            <person name="Fabre E."/>
            <person name="Fairhead C."/>
            <person name="Ferry-Dumazet H."/>
            <person name="Groppi A."/>
            <person name="Hantraye F."/>
            <person name="Hennequin C."/>
            <person name="Jauniaux N."/>
            <person name="Joyet P."/>
            <person name="Kachouri R."/>
            <person name="Kerrest A."/>
            <person name="Koszul R."/>
            <person name="Lemaire M."/>
            <person name="Lesur I."/>
            <person name="Ma L."/>
            <person name="Muller H."/>
            <person name="Nicaud J.-M."/>
            <person name="Nikolski M."/>
            <person name="Oztas S."/>
            <person name="Ozier-Kalogeropoulos O."/>
            <person name="Pellenz S."/>
            <person name="Potier S."/>
            <person name="Richard G.-F."/>
            <person name="Straub M.-L."/>
            <person name="Suleau A."/>
            <person name="Swennen D."/>
            <person name="Tekaia F."/>
            <person name="Wesolowski-Louvel M."/>
            <person name="Westhof E."/>
            <person name="Wirth B."/>
            <person name="Zeniou-Meyer M."/>
            <person name="Zivanovic Y."/>
            <person name="Bolotin-Fukuhara M."/>
            <person name="Thierry A."/>
            <person name="Bouchier C."/>
            <person name="Caudron B."/>
            <person name="Scarpelli C."/>
            <person name="Gaillardin C."/>
            <person name="Weissenbach J."/>
            <person name="Wincker P."/>
            <person name="Souciet J.-L."/>
        </authorList>
    </citation>
    <scope>NUCLEOTIDE SEQUENCE [LARGE SCALE GENOMIC DNA]</scope>
    <source>
        <strain>CLIB 122 / E 150</strain>
    </source>
</reference>
<name>DBP7_YARLI</name>
<gene>
    <name type="primary">DBP7</name>
    <name type="ordered locus">YALI0D23133g</name>
</gene>
<feature type="chain" id="PRO_0000256029" description="ATP-dependent RNA helicase DBP7">
    <location>
        <begin position="1"/>
        <end position="799"/>
    </location>
</feature>
<feature type="domain" description="Helicase ATP-binding" evidence="2">
    <location>
        <begin position="265"/>
        <end position="465"/>
    </location>
</feature>
<feature type="domain" description="Helicase C-terminal" evidence="3">
    <location>
        <begin position="511"/>
        <end position="679"/>
    </location>
</feature>
<feature type="region of interest" description="Disordered" evidence="4">
    <location>
        <begin position="34"/>
        <end position="177"/>
    </location>
</feature>
<feature type="region of interest" description="Disordered" evidence="4">
    <location>
        <begin position="201"/>
        <end position="229"/>
    </location>
</feature>
<feature type="region of interest" description="Disordered" evidence="4">
    <location>
        <begin position="750"/>
        <end position="799"/>
    </location>
</feature>
<feature type="short sequence motif" description="Q motif">
    <location>
        <begin position="233"/>
        <end position="261"/>
    </location>
</feature>
<feature type="short sequence motif" description="DEAD box">
    <location>
        <begin position="391"/>
        <end position="394"/>
    </location>
</feature>
<feature type="compositionally biased region" description="Basic and acidic residues" evidence="4">
    <location>
        <begin position="35"/>
        <end position="49"/>
    </location>
</feature>
<feature type="compositionally biased region" description="Basic and acidic residues" evidence="4">
    <location>
        <begin position="56"/>
        <end position="66"/>
    </location>
</feature>
<feature type="compositionally biased region" description="Basic and acidic residues" evidence="4">
    <location>
        <begin position="73"/>
        <end position="100"/>
    </location>
</feature>
<feature type="compositionally biased region" description="Basic and acidic residues" evidence="4">
    <location>
        <begin position="114"/>
        <end position="132"/>
    </location>
</feature>
<feature type="compositionally biased region" description="Basic and acidic residues" evidence="4">
    <location>
        <begin position="139"/>
        <end position="172"/>
    </location>
</feature>
<feature type="compositionally biased region" description="Acidic residues" evidence="4">
    <location>
        <begin position="208"/>
        <end position="220"/>
    </location>
</feature>
<feature type="compositionally biased region" description="Basic and acidic residues" evidence="4">
    <location>
        <begin position="754"/>
        <end position="780"/>
    </location>
</feature>
<feature type="binding site" evidence="2">
    <location>
        <begin position="278"/>
        <end position="285"/>
    </location>
    <ligand>
        <name>ATP</name>
        <dbReference type="ChEBI" id="CHEBI:30616"/>
    </ligand>
</feature>
<feature type="binding site" evidence="2">
    <location>
        <begin position="306"/>
        <end position="313"/>
    </location>
    <ligand>
        <name>ATP</name>
        <dbReference type="ChEBI" id="CHEBI:30616"/>
    </ligand>
</feature>
<proteinExistence type="inferred from homology"/>
<sequence length="799" mass="89657">MMLNLVVADGPRQLSAREKAAKLKKSGLSFAQRKALREEEKKNAWKKEQGGITTTIEDRMKRREQDNPPVRPKPYDKPYEKKPYEKKPFEKKPYEKKSYDKPVASKPVEETDEEKYQRLMEGGKRPEKERWVPQRNFRNRRDMEKAGKDQSQDATPKHHDRDVIGTREDGSLIRRIREKTGAKGGIKGTYVSSIFSEKKEDRIAGEDVQMEDEEEEEAENNAESSNAALKDSTTFSGLGCSQRLVDALVGMQLAKPTKIQRATIPRLIQRERDLFVQAQTGSGKTLAFVLPVLERIMSCDDVSRETGLFAVILTPTRELTTQIYSVLETLCRKACPWIVPGIVIGGEKKKSEKARIRKGVNILVATPGRLADHFDNTEALDLSQVRWVVLDEGDRLMELGFEETITKILRTIEWKSVLRGENYLKDIPKNLKPLPSRRVTVLCSATMKGGVTELGKSTLKDADWVSNDSVEDALAETSVETFSAPSQLVQEWVVVPAKLRLVTLLGALRGDILQSSEKTNTKVIVFLSCSDSVDFHFDVLSRDGSQINKMDTAKTAPLLLDDVSTSVYKLHGSLSQQARTATLASFAKNSTPSILLCTDVASRGLDLPKITHVIEYDPPFSIEDHLHRVGRTARAGQDGRALLFLLPGAEEGYVEKLKQSQQMKKTTYENILAAGFGGKGWDFAATNYHLDVERWVLGDETALDRARRGFTSHIRAYATHIAAEKDMFNVRMLHLGHLAKSFALREAPGKLGKKKDPEKIKVNKDGSLDETQARKKMLDRSRKHVYNSGESAMGGYVLE</sequence>
<comment type="function">
    <text evidence="1">ATP-binding RNA helicase involved in the biogenesis of 60S ribosomal subunits and is required for the normal formation of 25S and 5.8S rRNAs.</text>
</comment>
<comment type="catalytic activity">
    <reaction>
        <text>ATP + H2O = ADP + phosphate + H(+)</text>
        <dbReference type="Rhea" id="RHEA:13065"/>
        <dbReference type="ChEBI" id="CHEBI:15377"/>
        <dbReference type="ChEBI" id="CHEBI:15378"/>
        <dbReference type="ChEBI" id="CHEBI:30616"/>
        <dbReference type="ChEBI" id="CHEBI:43474"/>
        <dbReference type="ChEBI" id="CHEBI:456216"/>
        <dbReference type="EC" id="3.6.4.13"/>
    </reaction>
</comment>
<comment type="subcellular location">
    <subcellularLocation>
        <location evidence="1">Nucleus</location>
        <location evidence="1">Nucleolus</location>
    </subcellularLocation>
</comment>
<comment type="domain">
    <text>The Q motif is unique to and characteristic of the DEAD box family of RNA helicases and controls ATP binding and hydrolysis.</text>
</comment>
<comment type="similarity">
    <text evidence="5">Belongs to the DEAD box helicase family. DDX31/DBP7 subfamily.</text>
</comment>
<organism>
    <name type="scientific">Yarrowia lipolytica (strain CLIB 122 / E 150)</name>
    <name type="common">Yeast</name>
    <name type="synonym">Candida lipolytica</name>
    <dbReference type="NCBI Taxonomy" id="284591"/>
    <lineage>
        <taxon>Eukaryota</taxon>
        <taxon>Fungi</taxon>
        <taxon>Dikarya</taxon>
        <taxon>Ascomycota</taxon>
        <taxon>Saccharomycotina</taxon>
        <taxon>Dipodascomycetes</taxon>
        <taxon>Dipodascales</taxon>
        <taxon>Dipodascales incertae sedis</taxon>
        <taxon>Yarrowia</taxon>
    </lineage>
</organism>
<protein>
    <recommendedName>
        <fullName>ATP-dependent RNA helicase DBP7</fullName>
        <ecNumber>3.6.4.13</ecNumber>
    </recommendedName>
</protein>
<keyword id="KW-0067">ATP-binding</keyword>
<keyword id="KW-0347">Helicase</keyword>
<keyword id="KW-0378">Hydrolase</keyword>
<keyword id="KW-0547">Nucleotide-binding</keyword>
<keyword id="KW-0539">Nucleus</keyword>
<keyword id="KW-1185">Reference proteome</keyword>
<keyword id="KW-0690">Ribosome biogenesis</keyword>
<keyword id="KW-0694">RNA-binding</keyword>
<keyword id="KW-0698">rRNA processing</keyword>
<accession>Q6C835</accession>